<keyword id="KW-1185">Reference proteome</keyword>
<keyword id="KW-0687">Ribonucleoprotein</keyword>
<keyword id="KW-0689">Ribosomal protein</keyword>
<keyword id="KW-0694">RNA-binding</keyword>
<keyword id="KW-0699">rRNA-binding</keyword>
<keyword id="KW-0820">tRNA-binding</keyword>
<comment type="function">
    <text evidence="1">This is one of the proteins that bind and probably mediate the attachment of the 5S RNA into the large ribosomal subunit, where it forms part of the central protuberance. In the 70S ribosome it contacts protein S13 of the 30S subunit (bridge B1b), connecting the 2 subunits; this bridge is implicated in subunit movement. Contacts the P site tRNA; the 5S rRNA and some of its associated proteins might help stabilize positioning of ribosome-bound tRNAs.</text>
</comment>
<comment type="subunit">
    <text evidence="1">Part of the 50S ribosomal subunit; part of the 5S rRNA/L5/L18/L25 subcomplex. Contacts the 5S rRNA and the P site tRNA. Forms a bridge to the 30S subunit in the 70S ribosome.</text>
</comment>
<comment type="similarity">
    <text evidence="1">Belongs to the universal ribosomal protein uL5 family.</text>
</comment>
<dbReference type="EMBL" id="AE007869">
    <property type="protein sequence ID" value="AAK87697.1"/>
    <property type="molecule type" value="Genomic_DNA"/>
</dbReference>
<dbReference type="PIR" id="AD2814">
    <property type="entry name" value="AD2814"/>
</dbReference>
<dbReference type="PIR" id="H97592">
    <property type="entry name" value="H97592"/>
</dbReference>
<dbReference type="RefSeq" id="NP_354912.1">
    <property type="nucleotide sequence ID" value="NC_003062.2"/>
</dbReference>
<dbReference type="RefSeq" id="WP_006313976.1">
    <property type="nucleotide sequence ID" value="NC_003062.2"/>
</dbReference>
<dbReference type="SMR" id="Q8UE30"/>
<dbReference type="STRING" id="176299.Atu1934"/>
<dbReference type="EnsemblBacteria" id="AAK87697">
    <property type="protein sequence ID" value="AAK87697"/>
    <property type="gene ID" value="Atu1934"/>
</dbReference>
<dbReference type="GeneID" id="1133972"/>
<dbReference type="KEGG" id="atu:Atu1934"/>
<dbReference type="PATRIC" id="fig|176299.10.peg.1946"/>
<dbReference type="eggNOG" id="COG0094">
    <property type="taxonomic scope" value="Bacteria"/>
</dbReference>
<dbReference type="HOGENOM" id="CLU_061015_2_1_5"/>
<dbReference type="OrthoDB" id="9806626at2"/>
<dbReference type="PhylomeDB" id="Q8UE30"/>
<dbReference type="BioCyc" id="AGRO:ATU1934-MONOMER"/>
<dbReference type="Proteomes" id="UP000000813">
    <property type="component" value="Chromosome circular"/>
</dbReference>
<dbReference type="GO" id="GO:1990904">
    <property type="term" value="C:ribonucleoprotein complex"/>
    <property type="evidence" value="ECO:0007669"/>
    <property type="project" value="UniProtKB-KW"/>
</dbReference>
<dbReference type="GO" id="GO:0005840">
    <property type="term" value="C:ribosome"/>
    <property type="evidence" value="ECO:0007669"/>
    <property type="project" value="UniProtKB-KW"/>
</dbReference>
<dbReference type="GO" id="GO:0019843">
    <property type="term" value="F:rRNA binding"/>
    <property type="evidence" value="ECO:0007669"/>
    <property type="project" value="UniProtKB-UniRule"/>
</dbReference>
<dbReference type="GO" id="GO:0003735">
    <property type="term" value="F:structural constituent of ribosome"/>
    <property type="evidence" value="ECO:0007669"/>
    <property type="project" value="InterPro"/>
</dbReference>
<dbReference type="GO" id="GO:0000049">
    <property type="term" value="F:tRNA binding"/>
    <property type="evidence" value="ECO:0007669"/>
    <property type="project" value="UniProtKB-UniRule"/>
</dbReference>
<dbReference type="GO" id="GO:0006412">
    <property type="term" value="P:translation"/>
    <property type="evidence" value="ECO:0007669"/>
    <property type="project" value="UniProtKB-UniRule"/>
</dbReference>
<dbReference type="FunFam" id="3.30.1440.10:FF:000001">
    <property type="entry name" value="50S ribosomal protein L5"/>
    <property type="match status" value="1"/>
</dbReference>
<dbReference type="Gene3D" id="3.30.1440.10">
    <property type="match status" value="1"/>
</dbReference>
<dbReference type="HAMAP" id="MF_01333_B">
    <property type="entry name" value="Ribosomal_uL5_B"/>
    <property type="match status" value="1"/>
</dbReference>
<dbReference type="InterPro" id="IPR002132">
    <property type="entry name" value="Ribosomal_uL5"/>
</dbReference>
<dbReference type="InterPro" id="IPR020930">
    <property type="entry name" value="Ribosomal_uL5_bac-type"/>
</dbReference>
<dbReference type="InterPro" id="IPR031309">
    <property type="entry name" value="Ribosomal_uL5_C"/>
</dbReference>
<dbReference type="InterPro" id="IPR020929">
    <property type="entry name" value="Ribosomal_uL5_CS"/>
</dbReference>
<dbReference type="InterPro" id="IPR022803">
    <property type="entry name" value="Ribosomal_uL5_dom_sf"/>
</dbReference>
<dbReference type="InterPro" id="IPR031310">
    <property type="entry name" value="Ribosomal_uL5_N"/>
</dbReference>
<dbReference type="NCBIfam" id="NF000585">
    <property type="entry name" value="PRK00010.1"/>
    <property type="match status" value="1"/>
</dbReference>
<dbReference type="PANTHER" id="PTHR11994">
    <property type="entry name" value="60S RIBOSOMAL PROTEIN L11-RELATED"/>
    <property type="match status" value="1"/>
</dbReference>
<dbReference type="Pfam" id="PF00281">
    <property type="entry name" value="Ribosomal_L5"/>
    <property type="match status" value="1"/>
</dbReference>
<dbReference type="Pfam" id="PF00673">
    <property type="entry name" value="Ribosomal_L5_C"/>
    <property type="match status" value="1"/>
</dbReference>
<dbReference type="PIRSF" id="PIRSF002161">
    <property type="entry name" value="Ribosomal_L5"/>
    <property type="match status" value="1"/>
</dbReference>
<dbReference type="SUPFAM" id="SSF55282">
    <property type="entry name" value="RL5-like"/>
    <property type="match status" value="1"/>
</dbReference>
<dbReference type="PROSITE" id="PS00358">
    <property type="entry name" value="RIBOSOMAL_L5"/>
    <property type="match status" value="1"/>
</dbReference>
<organism>
    <name type="scientific">Agrobacterium fabrum (strain C58 / ATCC 33970)</name>
    <name type="common">Agrobacterium tumefaciens (strain C58)</name>
    <dbReference type="NCBI Taxonomy" id="176299"/>
    <lineage>
        <taxon>Bacteria</taxon>
        <taxon>Pseudomonadati</taxon>
        <taxon>Pseudomonadota</taxon>
        <taxon>Alphaproteobacteria</taxon>
        <taxon>Hyphomicrobiales</taxon>
        <taxon>Rhizobiaceae</taxon>
        <taxon>Rhizobium/Agrobacterium group</taxon>
        <taxon>Agrobacterium</taxon>
        <taxon>Agrobacterium tumefaciens complex</taxon>
    </lineage>
</organism>
<reference key="1">
    <citation type="journal article" date="2001" name="Science">
        <title>The genome of the natural genetic engineer Agrobacterium tumefaciens C58.</title>
        <authorList>
            <person name="Wood D.W."/>
            <person name="Setubal J.C."/>
            <person name="Kaul R."/>
            <person name="Monks D.E."/>
            <person name="Kitajima J.P."/>
            <person name="Okura V.K."/>
            <person name="Zhou Y."/>
            <person name="Chen L."/>
            <person name="Wood G.E."/>
            <person name="Almeida N.F. Jr."/>
            <person name="Woo L."/>
            <person name="Chen Y."/>
            <person name="Paulsen I.T."/>
            <person name="Eisen J.A."/>
            <person name="Karp P.D."/>
            <person name="Bovee D. Sr."/>
            <person name="Chapman P."/>
            <person name="Clendenning J."/>
            <person name="Deatherage G."/>
            <person name="Gillet W."/>
            <person name="Grant C."/>
            <person name="Kutyavin T."/>
            <person name="Levy R."/>
            <person name="Li M.-J."/>
            <person name="McClelland E."/>
            <person name="Palmieri A."/>
            <person name="Raymond C."/>
            <person name="Rouse G."/>
            <person name="Saenphimmachak C."/>
            <person name="Wu Z."/>
            <person name="Romero P."/>
            <person name="Gordon D."/>
            <person name="Zhang S."/>
            <person name="Yoo H."/>
            <person name="Tao Y."/>
            <person name="Biddle P."/>
            <person name="Jung M."/>
            <person name="Krespan W."/>
            <person name="Perry M."/>
            <person name="Gordon-Kamm B."/>
            <person name="Liao L."/>
            <person name="Kim S."/>
            <person name="Hendrick C."/>
            <person name="Zhao Z.-Y."/>
            <person name="Dolan M."/>
            <person name="Chumley F."/>
            <person name="Tingey S.V."/>
            <person name="Tomb J.-F."/>
            <person name="Gordon M.P."/>
            <person name="Olson M.V."/>
            <person name="Nester E.W."/>
        </authorList>
    </citation>
    <scope>NUCLEOTIDE SEQUENCE [LARGE SCALE GENOMIC DNA]</scope>
    <source>
        <strain>C58 / ATCC 33970</strain>
    </source>
</reference>
<reference key="2">
    <citation type="journal article" date="2001" name="Science">
        <title>Genome sequence of the plant pathogen and biotechnology agent Agrobacterium tumefaciens C58.</title>
        <authorList>
            <person name="Goodner B."/>
            <person name="Hinkle G."/>
            <person name="Gattung S."/>
            <person name="Miller N."/>
            <person name="Blanchard M."/>
            <person name="Qurollo B."/>
            <person name="Goldman B.S."/>
            <person name="Cao Y."/>
            <person name="Askenazi M."/>
            <person name="Halling C."/>
            <person name="Mullin L."/>
            <person name="Houmiel K."/>
            <person name="Gordon J."/>
            <person name="Vaudin M."/>
            <person name="Iartchouk O."/>
            <person name="Epp A."/>
            <person name="Liu F."/>
            <person name="Wollam C."/>
            <person name="Allinger M."/>
            <person name="Doughty D."/>
            <person name="Scott C."/>
            <person name="Lappas C."/>
            <person name="Markelz B."/>
            <person name="Flanagan C."/>
            <person name="Crowell C."/>
            <person name="Gurson J."/>
            <person name="Lomo C."/>
            <person name="Sear C."/>
            <person name="Strub G."/>
            <person name="Cielo C."/>
            <person name="Slater S."/>
        </authorList>
    </citation>
    <scope>NUCLEOTIDE SEQUENCE [LARGE SCALE GENOMIC DNA]</scope>
    <source>
        <strain>C58 / ATCC 33970</strain>
    </source>
</reference>
<evidence type="ECO:0000255" key="1">
    <source>
        <dbReference type="HAMAP-Rule" id="MF_01333"/>
    </source>
</evidence>
<evidence type="ECO:0000305" key="2"/>
<proteinExistence type="inferred from homology"/>
<protein>
    <recommendedName>
        <fullName evidence="1">Large ribosomal subunit protein uL5</fullName>
    </recommendedName>
    <alternativeName>
        <fullName evidence="2">50S ribosomal protein L5</fullName>
    </alternativeName>
</protein>
<feature type="chain" id="PRO_0000124883" description="Large ribosomal subunit protein uL5">
    <location>
        <begin position="1"/>
        <end position="184"/>
    </location>
</feature>
<accession>Q8UE30</accession>
<accession>Q7CY78</accession>
<name>RL5_AGRFC</name>
<sequence>MADKYEPRLKTEYVSRIRGAMQEKFSYANVMMIPKLDKIVINMGVGEATADSKKPTIAAGDLAAIAGQKPVITKARNSIAGFKVREHMPIGAKVTLRGERMYEFLDRLINIALPRVRDFRGLNPKSFDGRGNFAMGIKEHIVFPEINYDKVDQMWGMDIIVCTTATSDDEARALLTEFNFPFRH</sequence>
<gene>
    <name evidence="1" type="primary">rplE</name>
    <name type="ordered locus">Atu1934</name>
    <name type="ORF">AGR_C_3536</name>
</gene>